<reference key="1">
    <citation type="journal article" date="2009" name="Comp. Biochem. Physiol.">
        <title>The primary structure of a novel riboflavin-binding protein of emu (Dromaius novaehollandiae).</title>
        <authorList>
            <person name="Maehashi K."/>
            <person name="Matano M."/>
            <person name="Uchino M."/>
            <person name="Yamamoto Y."/>
            <person name="Takano K."/>
            <person name="Watanabe T."/>
        </authorList>
    </citation>
    <scope>NUCLEOTIDE SEQUENCE [GENOMIC DNA / MRNA]</scope>
    <scope>PROTEIN SEQUENCE OF 18-44</scope>
    <scope>TISSUE SPECIFICITY</scope>
    <scope>GLYCOSYLATION</scope>
    <source>
        <tissue>Egg yolk</tissue>
        <tissue>Oviduct</tissue>
    </source>
</reference>
<proteinExistence type="evidence at protein level"/>
<sequence length="238" mass="27344">MLRFAVTLFAVITSSTCKKYSCLEGETHKLKPSPEPNMQECTLYSESSCCYANFTEQLAHSPVIKINNSYWNRCGQLSKSCEDFTKKIECFYRCSPHAAHWIHPNYTAGIQSVPLCQSFCDDWYEACKDDSACVRNWLMDWEWDESGVNHCKNECIPYSEMYVNGTDMCQSMWGESFKVSESSCLCLQMNKKDMMAIKYLLSESSEESSSVSSSEERACQKKLLKFEKLKEEEGGETR</sequence>
<protein>
    <recommendedName>
        <fullName evidence="4 5">Riboflavin-binding protein</fullName>
        <shortName evidence="1">RBP</shortName>
    </recommendedName>
</protein>
<accession>P86009</accession>
<accession>B9A1T1</accession>
<organism>
    <name type="scientific">Dromaius novaehollandiae</name>
    <name type="common">Emu</name>
    <dbReference type="NCBI Taxonomy" id="8790"/>
    <lineage>
        <taxon>Eukaryota</taxon>
        <taxon>Metazoa</taxon>
        <taxon>Chordata</taxon>
        <taxon>Craniata</taxon>
        <taxon>Vertebrata</taxon>
        <taxon>Euteleostomi</taxon>
        <taxon>Archelosauria</taxon>
        <taxon>Archosauria</taxon>
        <taxon>Dinosauria</taxon>
        <taxon>Saurischia</taxon>
        <taxon>Theropoda</taxon>
        <taxon>Coelurosauria</taxon>
        <taxon>Aves</taxon>
        <taxon>Palaeognathae</taxon>
        <taxon>Casuariiformes</taxon>
        <taxon>Dromaiidae</taxon>
        <taxon>Dromaius</taxon>
    </lineage>
</organism>
<evidence type="ECO:0000250" key="1">
    <source>
        <dbReference type="UniProtKB" id="P02752"/>
    </source>
</evidence>
<evidence type="ECO:0000255" key="2"/>
<evidence type="ECO:0000269" key="3">
    <source>
    </source>
</evidence>
<evidence type="ECO:0000303" key="4">
    <source>
    </source>
</evidence>
<evidence type="ECO:0000312" key="5">
    <source>
        <dbReference type="EMBL" id="BAH22358.1"/>
    </source>
</evidence>
<feature type="signal peptide" evidence="3">
    <location>
        <begin position="1"/>
        <end position="17"/>
    </location>
</feature>
<feature type="chain" id="PRO_5000434275" description="Riboflavin-binding protein" evidence="3">
    <location>
        <begin position="18"/>
        <end position="238"/>
    </location>
</feature>
<feature type="modified residue" description="Phosphoserine" evidence="1">
    <location>
        <position position="204"/>
    </location>
</feature>
<feature type="modified residue" description="Phosphoserine" evidence="1">
    <location>
        <position position="205"/>
    </location>
</feature>
<feature type="modified residue" description="Phosphoserine" evidence="1">
    <location>
        <position position="208"/>
    </location>
</feature>
<feature type="modified residue" description="Phosphoserine" evidence="1">
    <location>
        <position position="209"/>
    </location>
</feature>
<feature type="modified residue" description="Phosphoserine" evidence="1">
    <location>
        <position position="210"/>
    </location>
</feature>
<feature type="modified residue" description="Phosphoserine" evidence="1">
    <location>
        <position position="212"/>
    </location>
</feature>
<feature type="modified residue" description="Phosphoserine" evidence="1">
    <location>
        <position position="213"/>
    </location>
</feature>
<feature type="modified residue" description="Phosphoserine" evidence="1">
    <location>
        <position position="214"/>
    </location>
</feature>
<feature type="glycosylation site" description="N-linked (GlcNAc...) asparagine" evidence="2">
    <location>
        <position position="53"/>
    </location>
</feature>
<feature type="glycosylation site" description="N-linked (GlcNAc...) asparagine" evidence="2">
    <location>
        <position position="67"/>
    </location>
</feature>
<feature type="glycosylation site" description="N-linked (GlcNAc...) asparagine" evidence="2">
    <location>
        <position position="105"/>
    </location>
</feature>
<feature type="glycosylation site" description="N-linked (GlcNAc...) asparagine" evidence="2">
    <location>
        <position position="164"/>
    </location>
</feature>
<feature type="disulfide bond" description="Or C-22 with C-50" evidence="1">
    <location>
        <begin position="22"/>
        <end position="49"/>
    </location>
</feature>
<feature type="disulfide bond" evidence="1">
    <location>
        <begin position="41"/>
        <end position="90"/>
    </location>
</feature>
<feature type="disulfide bond" description="Or C-49 with C-94" evidence="1">
    <location>
        <begin position="50"/>
        <end position="94"/>
    </location>
</feature>
<feature type="disulfide bond" evidence="1">
    <location>
        <begin position="74"/>
        <end position="155"/>
    </location>
</feature>
<feature type="disulfide bond" evidence="1">
    <location>
        <begin position="81"/>
        <end position="127"/>
    </location>
</feature>
<feature type="disulfide bond" evidence="1">
    <location>
        <begin position="116"/>
        <end position="186"/>
    </location>
</feature>
<feature type="disulfide bond" evidence="1">
    <location>
        <begin position="120"/>
        <end position="169"/>
    </location>
</feature>
<feature type="disulfide bond" evidence="1">
    <location>
        <begin position="133"/>
        <end position="151"/>
    </location>
</feature>
<feature type="disulfide bond" evidence="1">
    <location>
        <begin position="184"/>
        <end position="219"/>
    </location>
</feature>
<comment type="function">
    <text evidence="1">Required for the transport of riboflavin to the developing oocyte.</text>
</comment>
<comment type="tissue specificity">
    <text evidence="3">Expressed in egg yolk and egg white (at protein level).</text>
</comment>
<comment type="PTM">
    <text evidence="3">N-glycosylated.</text>
</comment>
<comment type="miscellaneous">
    <text evidence="3">On the 2D-gel the determined MW is: 47 kDa.</text>
</comment>
<comment type="similarity">
    <text evidence="2">Belongs to the folate receptor family.</text>
</comment>
<keyword id="KW-0903">Direct protein sequencing</keyword>
<keyword id="KW-1015">Disulfide bond</keyword>
<keyword id="KW-0325">Glycoprotein</keyword>
<keyword id="KW-0597">Phosphoprotein</keyword>
<keyword id="KW-0732">Signal</keyword>
<keyword id="KW-0813">Transport</keyword>
<name>RBP_DRONO</name>
<dbReference type="EMBL" id="AB440148">
    <property type="protein sequence ID" value="BAH22358.1"/>
    <property type="molecule type" value="mRNA"/>
</dbReference>
<dbReference type="EMBL" id="AB469328">
    <property type="protein sequence ID" value="BAH22359.1"/>
    <property type="molecule type" value="Genomic_DNA"/>
</dbReference>
<dbReference type="RefSeq" id="XP_025959582.1">
    <property type="nucleotide sequence ID" value="XM_026103797.2"/>
</dbReference>
<dbReference type="SMR" id="P86009"/>
<dbReference type="Ensembl" id="ENSDNVT00000015924.1">
    <property type="protein sequence ID" value="ENSDNVP00000013216.1"/>
    <property type="gene ID" value="ENSDNVG00000009354.1"/>
</dbReference>
<dbReference type="GeneID" id="112985294"/>
<dbReference type="OrthoDB" id="5982417at2759"/>
<dbReference type="Proteomes" id="UP000694423">
    <property type="component" value="Unplaced"/>
</dbReference>
<dbReference type="GO" id="GO:0009897">
    <property type="term" value="C:external side of plasma membrane"/>
    <property type="evidence" value="ECO:0007669"/>
    <property type="project" value="TreeGrafter"/>
</dbReference>
<dbReference type="GO" id="GO:1902444">
    <property type="term" value="F:riboflavin binding"/>
    <property type="evidence" value="ECO:0007669"/>
    <property type="project" value="TreeGrafter"/>
</dbReference>
<dbReference type="GO" id="GO:0032217">
    <property type="term" value="F:riboflavin transmembrane transporter activity"/>
    <property type="evidence" value="ECO:0000250"/>
    <property type="project" value="UniProtKB"/>
</dbReference>
<dbReference type="GO" id="GO:0038023">
    <property type="term" value="F:signaling receptor activity"/>
    <property type="evidence" value="ECO:0007669"/>
    <property type="project" value="TreeGrafter"/>
</dbReference>
<dbReference type="GO" id="GO:0032218">
    <property type="term" value="P:riboflavin transport"/>
    <property type="evidence" value="ECO:0000250"/>
    <property type="project" value="UniProtKB"/>
</dbReference>
<dbReference type="InterPro" id="IPR004269">
    <property type="entry name" value="Folate_rcpt"/>
</dbReference>
<dbReference type="InterPro" id="IPR018143">
    <property type="entry name" value="Folate_rcpt-like"/>
</dbReference>
<dbReference type="PANTHER" id="PTHR10517">
    <property type="entry name" value="FOLATE RECEPTOR"/>
    <property type="match status" value="1"/>
</dbReference>
<dbReference type="PANTHER" id="PTHR10517:SF19">
    <property type="entry name" value="RETBINDIN"/>
    <property type="match status" value="1"/>
</dbReference>
<dbReference type="Pfam" id="PF03024">
    <property type="entry name" value="Folate_rec"/>
    <property type="match status" value="1"/>
</dbReference>